<dbReference type="SMR" id="P84882"/>
<dbReference type="GO" id="GO:0004867">
    <property type="term" value="F:serine-type endopeptidase inhibitor activity"/>
    <property type="evidence" value="ECO:0007669"/>
    <property type="project" value="UniProtKB-KW"/>
</dbReference>
<dbReference type="Gene3D" id="2.80.10.50">
    <property type="match status" value="1"/>
</dbReference>
<dbReference type="InterPro" id="IPR011065">
    <property type="entry name" value="Kunitz_inhibitor_STI-like_sf"/>
</dbReference>
<dbReference type="InterPro" id="IPR002160">
    <property type="entry name" value="Prot_inh_Kunz-lg"/>
</dbReference>
<dbReference type="PANTHER" id="PTHR33107">
    <property type="entry name" value="KUNITZ TRYPSIN INHIBITOR 2"/>
    <property type="match status" value="1"/>
</dbReference>
<dbReference type="PANTHER" id="PTHR33107:SF5">
    <property type="entry name" value="KUNITZ TRYPSIN INHIBITOR 5"/>
    <property type="match status" value="1"/>
</dbReference>
<dbReference type="Pfam" id="PF00197">
    <property type="entry name" value="Kunitz_legume"/>
    <property type="match status" value="1"/>
</dbReference>
<dbReference type="SMART" id="SM00452">
    <property type="entry name" value="STI"/>
    <property type="match status" value="1"/>
</dbReference>
<dbReference type="SUPFAM" id="SSF50386">
    <property type="entry name" value="STI-like"/>
    <property type="match status" value="1"/>
</dbReference>
<organism>
    <name type="scientific">Bauhinia rufa</name>
    <name type="common">Orchid tree</name>
    <name type="synonym">Pauletia rufa</name>
    <dbReference type="NCBI Taxonomy" id="390785"/>
    <lineage>
        <taxon>Eukaryota</taxon>
        <taxon>Viridiplantae</taxon>
        <taxon>Streptophyta</taxon>
        <taxon>Embryophyta</taxon>
        <taxon>Tracheophyta</taxon>
        <taxon>Spermatophyta</taxon>
        <taxon>Magnoliopsida</taxon>
        <taxon>eudicotyledons</taxon>
        <taxon>Gunneridae</taxon>
        <taxon>Pentapetalae</taxon>
        <taxon>rosids</taxon>
        <taxon>fabids</taxon>
        <taxon>Fabales</taxon>
        <taxon>Fabaceae</taxon>
        <taxon>Cercidoideae</taxon>
        <taxon>Cercideae</taxon>
        <taxon>Bauhiniinae</taxon>
        <taxon>Bauhinia</taxon>
    </lineage>
</organism>
<accession>P84882</accession>
<feature type="chain" id="PRO_0000245797" description="Kunitz-type trypsin inhibitor BrTI">
    <location>
        <begin position="1"/>
        <end position="164"/>
    </location>
</feature>
<feature type="site" description="Reactive bond for elastase" evidence="2">
    <location>
        <begin position="63"/>
        <end position="64"/>
    </location>
</feature>
<proteinExistence type="evidence at protein level"/>
<comment type="function">
    <text evidence="2">Inhibitor of trypsin and human plasma kallikrein with a Ki of 2.9 nM and 14.0 nM, respectively. Does not inhibit chymotrypsin, porcine pancreatic elastas, human neutrophil elastase, coagulation factor Xa, human thrombin, porcine pancreatic kallikrein or plasmin.</text>
</comment>
<comment type="similarity">
    <text evidence="1">Belongs to the leguminous Kunitz-type inhibitor family.</text>
</comment>
<protein>
    <recommendedName>
        <fullName>Kunitz-type trypsin inhibitor BrTI</fullName>
    </recommendedName>
</protein>
<sequence>SVVLDTKGQPVRNAADAYYLEPVARGDGGLALAKVGNEAEPKAVVLDPNHRPGLTVRFETPLRINIIKESFFLNIKFVPSSSESEVWEVRQQYPEGLAVKVTDTKSLVGPFRVEKEGEGYKIVYYPDRGETGLDIGLVHRNEKYYLAVKDGEPFVFKIRKATDE</sequence>
<evidence type="ECO:0000255" key="1"/>
<evidence type="ECO:0000269" key="2">
    <source>
    </source>
</evidence>
<keyword id="KW-0903">Direct protein sequencing</keyword>
<keyword id="KW-0646">Protease inhibitor</keyword>
<keyword id="KW-0722">Serine protease inhibitor</keyword>
<name>ITRY1_BAURF</name>
<reference key="1">
    <citation type="journal article" date="2006" name="Int. J. Biol. Macromol.">
        <title>Structural and inhibitory properties of a plant proteinase inhibitor containing the RGD motif.</title>
        <authorList>
            <person name="Nakahata A.M."/>
            <person name="Bueno N.R."/>
            <person name="Rocha H.A.O."/>
            <person name="Franco C.R.C."/>
            <person name="Chammas R."/>
            <person name="Nakaie C.R."/>
            <person name="Jasiulionis M.G."/>
            <person name="Nader H.B."/>
            <person name="Santana L.A."/>
            <person name="Sampaio M.U."/>
            <person name="Oliva M.L.V."/>
        </authorList>
    </citation>
    <scope>PROTEIN SEQUENCE</scope>
    <scope>FUNCTION</scope>
    <source>
        <tissue>Seed</tissue>
    </source>
</reference>